<reference key="1">
    <citation type="submission" date="2007-11" db="EMBL/GenBank/DDBJ databases">
        <authorList>
            <consortium name="The Salmonella enterica serovar Paratyphi B Genome Sequencing Project"/>
            <person name="McClelland M."/>
            <person name="Sanderson E.K."/>
            <person name="Porwollik S."/>
            <person name="Spieth J."/>
            <person name="Clifton W.S."/>
            <person name="Fulton R."/>
            <person name="Cordes M."/>
            <person name="Wollam A."/>
            <person name="Shah N."/>
            <person name="Pepin K."/>
            <person name="Bhonagiri V."/>
            <person name="Nash W."/>
            <person name="Johnson M."/>
            <person name="Thiruvilangam P."/>
            <person name="Wilson R."/>
        </authorList>
    </citation>
    <scope>NUCLEOTIDE SEQUENCE [LARGE SCALE GENOMIC DNA]</scope>
    <source>
        <strain>ATCC BAA-1250 / SPB7</strain>
    </source>
</reference>
<dbReference type="EC" id="6.3.2.-" evidence="1"/>
<dbReference type="EMBL" id="CP000886">
    <property type="protein sequence ID" value="ABX70747.1"/>
    <property type="molecule type" value="Genomic_DNA"/>
</dbReference>
<dbReference type="RefSeq" id="WP_000004797.1">
    <property type="nucleotide sequence ID" value="NC_010102.1"/>
</dbReference>
<dbReference type="SMR" id="A9N413"/>
<dbReference type="KEGG" id="spq:SPAB_05475"/>
<dbReference type="PATRIC" id="fig|1016998.12.peg.5133"/>
<dbReference type="HOGENOM" id="CLU_008255_1_1_6"/>
<dbReference type="BioCyc" id="SENT1016998:SPAB_RS22330-MONOMER"/>
<dbReference type="Proteomes" id="UP000008556">
    <property type="component" value="Chromosome"/>
</dbReference>
<dbReference type="GO" id="GO:0005829">
    <property type="term" value="C:cytosol"/>
    <property type="evidence" value="ECO:0007669"/>
    <property type="project" value="TreeGrafter"/>
</dbReference>
<dbReference type="GO" id="GO:0016880">
    <property type="term" value="F:acid-ammonia (or amide) ligase activity"/>
    <property type="evidence" value="ECO:0007669"/>
    <property type="project" value="UniProtKB-UniRule"/>
</dbReference>
<dbReference type="GO" id="GO:0005524">
    <property type="term" value="F:ATP binding"/>
    <property type="evidence" value="ECO:0007669"/>
    <property type="project" value="UniProtKB-UniRule"/>
</dbReference>
<dbReference type="GO" id="GO:0004824">
    <property type="term" value="F:lysine-tRNA ligase activity"/>
    <property type="evidence" value="ECO:0007669"/>
    <property type="project" value="InterPro"/>
</dbReference>
<dbReference type="GO" id="GO:0000049">
    <property type="term" value="F:tRNA binding"/>
    <property type="evidence" value="ECO:0007669"/>
    <property type="project" value="TreeGrafter"/>
</dbReference>
<dbReference type="GO" id="GO:0006430">
    <property type="term" value="P:lysyl-tRNA aminoacylation"/>
    <property type="evidence" value="ECO:0007669"/>
    <property type="project" value="InterPro"/>
</dbReference>
<dbReference type="FunFam" id="3.30.930.10:FF:000017">
    <property type="entry name" value="Elongation factor P--(R)-beta-lysine ligase"/>
    <property type="match status" value="1"/>
</dbReference>
<dbReference type="Gene3D" id="3.30.930.10">
    <property type="entry name" value="Bira Bifunctional Protein, Domain 2"/>
    <property type="match status" value="1"/>
</dbReference>
<dbReference type="HAMAP" id="MF_00174">
    <property type="entry name" value="EF_P_modif_A"/>
    <property type="match status" value="1"/>
</dbReference>
<dbReference type="InterPro" id="IPR004364">
    <property type="entry name" value="Aa-tRNA-synt_II"/>
</dbReference>
<dbReference type="InterPro" id="IPR006195">
    <property type="entry name" value="aa-tRNA-synth_II"/>
</dbReference>
<dbReference type="InterPro" id="IPR045864">
    <property type="entry name" value="aa-tRNA-synth_II/BPL/LPL"/>
</dbReference>
<dbReference type="InterPro" id="IPR004525">
    <property type="entry name" value="EpmA"/>
</dbReference>
<dbReference type="InterPro" id="IPR018149">
    <property type="entry name" value="Lys-tRNA-synth_II_C"/>
</dbReference>
<dbReference type="NCBIfam" id="TIGR00462">
    <property type="entry name" value="genX"/>
    <property type="match status" value="1"/>
</dbReference>
<dbReference type="NCBIfam" id="NF006828">
    <property type="entry name" value="PRK09350.1"/>
    <property type="match status" value="1"/>
</dbReference>
<dbReference type="PANTHER" id="PTHR42918:SF6">
    <property type="entry name" value="ELONGATION FACTOR P--(R)-BETA-LYSINE LIGASE"/>
    <property type="match status" value="1"/>
</dbReference>
<dbReference type="PANTHER" id="PTHR42918">
    <property type="entry name" value="LYSYL-TRNA SYNTHETASE"/>
    <property type="match status" value="1"/>
</dbReference>
<dbReference type="Pfam" id="PF00152">
    <property type="entry name" value="tRNA-synt_2"/>
    <property type="match status" value="1"/>
</dbReference>
<dbReference type="PRINTS" id="PR00982">
    <property type="entry name" value="TRNASYNTHLYS"/>
</dbReference>
<dbReference type="SUPFAM" id="SSF55681">
    <property type="entry name" value="Class II aaRS and biotin synthetases"/>
    <property type="match status" value="1"/>
</dbReference>
<dbReference type="PROSITE" id="PS50862">
    <property type="entry name" value="AA_TRNA_LIGASE_II"/>
    <property type="match status" value="1"/>
</dbReference>
<proteinExistence type="inferred from homology"/>
<name>EPMA_SALPB</name>
<feature type="chain" id="PRO_1000077141" description="Elongation factor P--(R)-beta-lysine ligase">
    <location>
        <begin position="1"/>
        <end position="325"/>
    </location>
</feature>
<feature type="binding site" evidence="1">
    <location>
        <begin position="76"/>
        <end position="78"/>
    </location>
    <ligand>
        <name>substrate</name>
    </ligand>
</feature>
<feature type="binding site" evidence="1">
    <location>
        <begin position="100"/>
        <end position="102"/>
    </location>
    <ligand>
        <name>ATP</name>
        <dbReference type="ChEBI" id="CHEBI:30616"/>
    </ligand>
</feature>
<feature type="binding site" evidence="1">
    <location>
        <position position="109"/>
    </location>
    <ligand>
        <name>ATP</name>
        <dbReference type="ChEBI" id="CHEBI:30616"/>
    </ligand>
</feature>
<feature type="binding site" evidence="1">
    <location>
        <position position="118"/>
    </location>
    <ligand>
        <name>substrate</name>
    </ligand>
</feature>
<feature type="binding site" evidence="1">
    <location>
        <begin position="244"/>
        <end position="245"/>
    </location>
    <ligand>
        <name>ATP</name>
        <dbReference type="ChEBI" id="CHEBI:30616"/>
    </ligand>
</feature>
<feature type="binding site" evidence="1">
    <location>
        <position position="251"/>
    </location>
    <ligand>
        <name>substrate</name>
    </ligand>
</feature>
<feature type="binding site" evidence="1">
    <location>
        <position position="300"/>
    </location>
    <ligand>
        <name>ATP</name>
        <dbReference type="ChEBI" id="CHEBI:30616"/>
    </ligand>
</feature>
<accession>A9N413</accession>
<sequence length="325" mass="36874">MSETATWQPSASIPNLLKRAAIMAEIRRFFADRGVLEVETPCMSQATVTDIHLFPFETRFVGPGHSQGMNLYLMTSPEYHMKRLLAAGCGPVFQLCRSFRNEEMGRHHNPEFTMLEWYRPHYDMYRLMNEVDDLLQQVLDCQPAESLSYQQAFQRHLEIDPLSADKTQLREAAAKLDLSNIADTEEDRDTLLQLLFTMGVEPHIGKEKPTFIYHFPASQASLAQISTEDHRVAERFEVYYKGIELANGFHELTDAREQQQRFEQDNRKRAARGLPQQPIDQNLLDALAAGLPDCSGVALGVDRLVMLALGAESLADVIAFTVDRA</sequence>
<protein>
    <recommendedName>
        <fullName evidence="1">Elongation factor P--(R)-beta-lysine ligase</fullName>
        <shortName evidence="1">EF-P--(R)-beta-lysine ligase</shortName>
        <ecNumber evidence="1">6.3.2.-</ecNumber>
    </recommendedName>
    <alternativeName>
        <fullName evidence="1">EF-P post-translational modification enzyme A</fullName>
    </alternativeName>
    <alternativeName>
        <fullName evidence="1">EF-P-lysine lysyltransferase</fullName>
    </alternativeName>
</protein>
<gene>
    <name evidence="1" type="primary">epmA</name>
    <name type="synonym">yjeA</name>
    <name type="ordered locus">SPAB_05475</name>
</gene>
<keyword id="KW-0067">ATP-binding</keyword>
<keyword id="KW-0436">Ligase</keyword>
<keyword id="KW-0547">Nucleotide-binding</keyword>
<evidence type="ECO:0000255" key="1">
    <source>
        <dbReference type="HAMAP-Rule" id="MF_00174"/>
    </source>
</evidence>
<comment type="function">
    <text evidence="1">With EpmB is involved in the beta-lysylation step of the post-translational modification of translation elongation factor P (EF-P) on 'Lys-34'. Catalyzes the ATP-dependent activation of (R)-beta-lysine produced by EpmB, forming a lysyl-adenylate, from which the beta-lysyl moiety is then transferred to the epsilon-amino group of EF-P 'Lys-34'.</text>
</comment>
<comment type="catalytic activity">
    <reaction evidence="1">
        <text>D-beta-lysine + L-lysyl-[protein] + ATP = N(6)-((3R)-3,6-diaminohexanoyl)-L-lysyl-[protein] + AMP + diphosphate + H(+)</text>
        <dbReference type="Rhea" id="RHEA:83435"/>
        <dbReference type="Rhea" id="RHEA-COMP:9752"/>
        <dbReference type="Rhea" id="RHEA-COMP:20131"/>
        <dbReference type="ChEBI" id="CHEBI:15378"/>
        <dbReference type="ChEBI" id="CHEBI:29969"/>
        <dbReference type="ChEBI" id="CHEBI:30616"/>
        <dbReference type="ChEBI" id="CHEBI:33019"/>
        <dbReference type="ChEBI" id="CHEBI:84138"/>
        <dbReference type="ChEBI" id="CHEBI:156053"/>
        <dbReference type="ChEBI" id="CHEBI:456215"/>
    </reaction>
    <physiologicalReaction direction="left-to-right" evidence="1">
        <dbReference type="Rhea" id="RHEA:83436"/>
    </physiologicalReaction>
</comment>
<comment type="subunit">
    <text evidence="1">Homodimer.</text>
</comment>
<comment type="similarity">
    <text evidence="1">Belongs to the class-II aminoacyl-tRNA synthetase family. EpmA subfamily.</text>
</comment>
<organism>
    <name type="scientific">Salmonella paratyphi B (strain ATCC BAA-1250 / SPB7)</name>
    <dbReference type="NCBI Taxonomy" id="1016998"/>
    <lineage>
        <taxon>Bacteria</taxon>
        <taxon>Pseudomonadati</taxon>
        <taxon>Pseudomonadota</taxon>
        <taxon>Gammaproteobacteria</taxon>
        <taxon>Enterobacterales</taxon>
        <taxon>Enterobacteriaceae</taxon>
        <taxon>Salmonella</taxon>
    </lineage>
</organism>